<protein>
    <recommendedName>
        <fullName evidence="1">Endoribonuclease YbeY</fullName>
        <ecNumber evidence="1">3.1.-.-</ecNumber>
    </recommendedName>
</protein>
<reference key="1">
    <citation type="journal article" date="2006" name="J. Bacteriol.">
        <title>Whole-genome sequence of Listeria welshimeri reveals common steps in genome reduction with Listeria innocua as compared to Listeria monocytogenes.</title>
        <authorList>
            <person name="Hain T."/>
            <person name="Steinweg C."/>
            <person name="Kuenne C.T."/>
            <person name="Billion A."/>
            <person name="Ghai R."/>
            <person name="Chatterjee S.S."/>
            <person name="Domann E."/>
            <person name="Kaerst U."/>
            <person name="Goesmann A."/>
            <person name="Bekel T."/>
            <person name="Bartels D."/>
            <person name="Kaiser O."/>
            <person name="Meyer F."/>
            <person name="Puehler A."/>
            <person name="Weisshaar B."/>
            <person name="Wehland J."/>
            <person name="Liang C."/>
            <person name="Dandekar T."/>
            <person name="Lampidis R."/>
            <person name="Kreft J."/>
            <person name="Goebel W."/>
            <person name="Chakraborty T."/>
        </authorList>
    </citation>
    <scope>NUCLEOTIDE SEQUENCE [LARGE SCALE GENOMIC DNA]</scope>
    <source>
        <strain>ATCC 35897 / DSM 20650 / CCUG 15529 / CIP 8149 / NCTC 11857 / SLCC 5334 / V8</strain>
    </source>
</reference>
<name>YBEY_LISW6</name>
<comment type="function">
    <text evidence="1">Single strand-specific metallo-endoribonuclease involved in late-stage 70S ribosome quality control and in maturation of the 3' terminus of the 16S rRNA.</text>
</comment>
<comment type="cofactor">
    <cofactor evidence="1">
        <name>Zn(2+)</name>
        <dbReference type="ChEBI" id="CHEBI:29105"/>
    </cofactor>
    <text evidence="1">Binds 1 zinc ion.</text>
</comment>
<comment type="subcellular location">
    <subcellularLocation>
        <location evidence="1">Cytoplasm</location>
    </subcellularLocation>
</comment>
<comment type="similarity">
    <text evidence="1">Belongs to the endoribonuclease YbeY family.</text>
</comment>
<evidence type="ECO:0000255" key="1">
    <source>
        <dbReference type="HAMAP-Rule" id="MF_00009"/>
    </source>
</evidence>
<organism>
    <name type="scientific">Listeria welshimeri serovar 6b (strain ATCC 35897 / DSM 20650 / CCUG 15529 / CIP 8149 / NCTC 11857 / SLCC 5334 / V8)</name>
    <dbReference type="NCBI Taxonomy" id="386043"/>
    <lineage>
        <taxon>Bacteria</taxon>
        <taxon>Bacillati</taxon>
        <taxon>Bacillota</taxon>
        <taxon>Bacilli</taxon>
        <taxon>Bacillales</taxon>
        <taxon>Listeriaceae</taxon>
        <taxon>Listeria</taxon>
    </lineage>
</organism>
<keyword id="KW-0963">Cytoplasm</keyword>
<keyword id="KW-0255">Endonuclease</keyword>
<keyword id="KW-0378">Hydrolase</keyword>
<keyword id="KW-0479">Metal-binding</keyword>
<keyword id="KW-0540">Nuclease</keyword>
<keyword id="KW-0690">Ribosome biogenesis</keyword>
<keyword id="KW-0698">rRNA processing</keyword>
<keyword id="KW-0862">Zinc</keyword>
<accession>A0AIR6</accession>
<feature type="chain" id="PRO_0000284235" description="Endoribonuclease YbeY">
    <location>
        <begin position="1"/>
        <end position="161"/>
    </location>
</feature>
<feature type="binding site" evidence="1">
    <location>
        <position position="127"/>
    </location>
    <ligand>
        <name>Zn(2+)</name>
        <dbReference type="ChEBI" id="CHEBI:29105"/>
        <note>catalytic</note>
    </ligand>
</feature>
<feature type="binding site" evidence="1">
    <location>
        <position position="131"/>
    </location>
    <ligand>
        <name>Zn(2+)</name>
        <dbReference type="ChEBI" id="CHEBI:29105"/>
        <note>catalytic</note>
    </ligand>
</feature>
<feature type="binding site" evidence="1">
    <location>
        <position position="137"/>
    </location>
    <ligand>
        <name>Zn(2+)</name>
        <dbReference type="ChEBI" id="CHEBI:29105"/>
        <note>catalytic</note>
    </ligand>
</feature>
<proteinExistence type="inferred from homology"/>
<sequence length="161" mass="18396">MPVLEIDLLDETNKLLDEDKQLVENILQFAAGYLKIDEGTELSLTFTTNEGIREINREYRNKDQATDVISFALEEMGEGETEIDWADFDLETPKMLGDIIISTEKAEEQAKDYGHTKARELGFLAVHGLLHLLGYDHMEPDEEKIMFGLQKEVLDAYGLER</sequence>
<dbReference type="EC" id="3.1.-.-" evidence="1"/>
<dbReference type="EMBL" id="AM263198">
    <property type="protein sequence ID" value="CAK20898.1"/>
    <property type="molecule type" value="Genomic_DNA"/>
</dbReference>
<dbReference type="RefSeq" id="WP_011702273.1">
    <property type="nucleotide sequence ID" value="NC_008555.1"/>
</dbReference>
<dbReference type="SMR" id="A0AIR6"/>
<dbReference type="STRING" id="386043.lwe1480"/>
<dbReference type="GeneID" id="61189356"/>
<dbReference type="KEGG" id="lwe:lwe1480"/>
<dbReference type="eggNOG" id="COG0319">
    <property type="taxonomic scope" value="Bacteria"/>
</dbReference>
<dbReference type="HOGENOM" id="CLU_106710_3_0_9"/>
<dbReference type="OrthoDB" id="9807740at2"/>
<dbReference type="Proteomes" id="UP000000779">
    <property type="component" value="Chromosome"/>
</dbReference>
<dbReference type="GO" id="GO:0005737">
    <property type="term" value="C:cytoplasm"/>
    <property type="evidence" value="ECO:0007669"/>
    <property type="project" value="UniProtKB-SubCell"/>
</dbReference>
<dbReference type="GO" id="GO:0004222">
    <property type="term" value="F:metalloendopeptidase activity"/>
    <property type="evidence" value="ECO:0007669"/>
    <property type="project" value="InterPro"/>
</dbReference>
<dbReference type="GO" id="GO:0004521">
    <property type="term" value="F:RNA endonuclease activity"/>
    <property type="evidence" value="ECO:0007669"/>
    <property type="project" value="UniProtKB-UniRule"/>
</dbReference>
<dbReference type="GO" id="GO:0008270">
    <property type="term" value="F:zinc ion binding"/>
    <property type="evidence" value="ECO:0007669"/>
    <property type="project" value="UniProtKB-UniRule"/>
</dbReference>
<dbReference type="GO" id="GO:0006364">
    <property type="term" value="P:rRNA processing"/>
    <property type="evidence" value="ECO:0007669"/>
    <property type="project" value="UniProtKB-UniRule"/>
</dbReference>
<dbReference type="Gene3D" id="3.40.390.30">
    <property type="entry name" value="Metalloproteases ('zincins'), catalytic domain"/>
    <property type="match status" value="1"/>
</dbReference>
<dbReference type="HAMAP" id="MF_00009">
    <property type="entry name" value="Endoribonucl_YbeY"/>
    <property type="match status" value="1"/>
</dbReference>
<dbReference type="InterPro" id="IPR023091">
    <property type="entry name" value="MetalPrtase_cat_dom_sf_prd"/>
</dbReference>
<dbReference type="InterPro" id="IPR002036">
    <property type="entry name" value="YbeY"/>
</dbReference>
<dbReference type="InterPro" id="IPR020549">
    <property type="entry name" value="YbeY_CS"/>
</dbReference>
<dbReference type="NCBIfam" id="TIGR00043">
    <property type="entry name" value="rRNA maturation RNase YbeY"/>
    <property type="match status" value="1"/>
</dbReference>
<dbReference type="PANTHER" id="PTHR46986">
    <property type="entry name" value="ENDORIBONUCLEASE YBEY, CHLOROPLASTIC"/>
    <property type="match status" value="1"/>
</dbReference>
<dbReference type="PANTHER" id="PTHR46986:SF1">
    <property type="entry name" value="ENDORIBONUCLEASE YBEY, CHLOROPLASTIC"/>
    <property type="match status" value="1"/>
</dbReference>
<dbReference type="Pfam" id="PF02130">
    <property type="entry name" value="YbeY"/>
    <property type="match status" value="1"/>
</dbReference>
<dbReference type="SUPFAM" id="SSF55486">
    <property type="entry name" value="Metalloproteases ('zincins'), catalytic domain"/>
    <property type="match status" value="1"/>
</dbReference>
<dbReference type="PROSITE" id="PS01306">
    <property type="entry name" value="UPF0054"/>
    <property type="match status" value="1"/>
</dbReference>
<gene>
    <name evidence="1" type="primary">ybeY</name>
    <name type="ordered locus">lwe1480</name>
</gene>